<organism>
    <name type="scientific">Vibrio vulnificus (strain CMCP6)</name>
    <dbReference type="NCBI Taxonomy" id="216895"/>
    <lineage>
        <taxon>Bacteria</taxon>
        <taxon>Pseudomonadati</taxon>
        <taxon>Pseudomonadota</taxon>
        <taxon>Gammaproteobacteria</taxon>
        <taxon>Vibrionales</taxon>
        <taxon>Vibrionaceae</taxon>
        <taxon>Vibrio</taxon>
    </lineage>
</organism>
<protein>
    <recommendedName>
        <fullName evidence="1">Phosphoglycolate phosphatase</fullName>
        <shortName evidence="1">PGP</shortName>
        <shortName evidence="1">PGPase</shortName>
        <ecNumber evidence="1">3.1.3.18</ecNumber>
    </recommendedName>
</protein>
<comment type="function">
    <text evidence="1">Specifically catalyzes the dephosphorylation of 2-phosphoglycolate. Is involved in the dissimilation of the intracellular 2-phosphoglycolate formed during the DNA repair of 3'-phosphoglycolate ends, a major class of DNA lesions induced by oxidative stress.</text>
</comment>
<comment type="catalytic activity">
    <reaction evidence="1">
        <text>2-phosphoglycolate + H2O = glycolate + phosphate</text>
        <dbReference type="Rhea" id="RHEA:14369"/>
        <dbReference type="ChEBI" id="CHEBI:15377"/>
        <dbReference type="ChEBI" id="CHEBI:29805"/>
        <dbReference type="ChEBI" id="CHEBI:43474"/>
        <dbReference type="ChEBI" id="CHEBI:58033"/>
        <dbReference type="EC" id="3.1.3.18"/>
    </reaction>
</comment>
<comment type="cofactor">
    <cofactor evidence="1">
        <name>Mg(2+)</name>
        <dbReference type="ChEBI" id="CHEBI:18420"/>
    </cofactor>
</comment>
<comment type="pathway">
    <text evidence="1">Organic acid metabolism; glycolate biosynthesis; glycolate from 2-phosphoglycolate: step 1/1.</text>
</comment>
<comment type="similarity">
    <text evidence="1">Belongs to the HAD-like hydrolase superfamily. CbbY/CbbZ/Gph/YieH family.</text>
</comment>
<comment type="sequence caution" evidence="2">
    <conflict type="erroneous initiation">
        <sequence resource="EMBL-CDS" id="AAO09761"/>
    </conflict>
    <text>Truncated N-terminus.</text>
</comment>
<name>GPH_VIBVU</name>
<accession>Q8DCT7</accession>
<feature type="chain" id="PRO_0000108045" description="Phosphoglycolate phosphatase">
    <location>
        <begin position="1"/>
        <end position="228"/>
    </location>
</feature>
<feature type="active site" description="Nucleophile" evidence="1">
    <location>
        <position position="12"/>
    </location>
</feature>
<feature type="binding site" evidence="1">
    <location>
        <position position="12"/>
    </location>
    <ligand>
        <name>Mg(2+)</name>
        <dbReference type="ChEBI" id="CHEBI:18420"/>
    </ligand>
</feature>
<feature type="binding site" evidence="1">
    <location>
        <position position="14"/>
    </location>
    <ligand>
        <name>Mg(2+)</name>
        <dbReference type="ChEBI" id="CHEBI:18420"/>
    </ligand>
</feature>
<feature type="binding site" evidence="1">
    <location>
        <position position="177"/>
    </location>
    <ligand>
        <name>Mg(2+)</name>
        <dbReference type="ChEBI" id="CHEBI:18420"/>
    </ligand>
</feature>
<gene>
    <name evidence="1" type="primary">gph</name>
    <name type="ordered locus">VV1_1306</name>
</gene>
<reference key="1">
    <citation type="submission" date="2002-12" db="EMBL/GenBank/DDBJ databases">
        <title>Complete genome sequence of Vibrio vulnificus CMCP6.</title>
        <authorList>
            <person name="Rhee J.H."/>
            <person name="Kim S.Y."/>
            <person name="Chung S.S."/>
            <person name="Kim J.J."/>
            <person name="Moon Y.H."/>
            <person name="Jeong H."/>
            <person name="Choy H.E."/>
        </authorList>
    </citation>
    <scope>NUCLEOTIDE SEQUENCE [LARGE SCALE GENOMIC DNA]</scope>
    <source>
        <strain>CMCP6</strain>
    </source>
</reference>
<sequence length="228" mass="24809">MTQQEIKLIAFDLDGTLLDSVPDLAVAADQATRAVGFPGVTELQVRDYVGNGADILIGRALSQSLTINPELSDELRAQARELFDDFYQQTGHKLSHLYPTVKETLKELHQAGFTLALVTNKPSKFVPDVLQQHGIADYFVDVLGGDSFPEKKPNPIALNWLMEKHQIQPTEMLMVGDSKNDILAAKNAGCASFGLTYGYNHGEPIAASEPDFVADSLAQLLDVVLVSA</sequence>
<evidence type="ECO:0000255" key="1">
    <source>
        <dbReference type="HAMAP-Rule" id="MF_00495"/>
    </source>
</evidence>
<evidence type="ECO:0000305" key="2"/>
<proteinExistence type="inferred from homology"/>
<dbReference type="EC" id="3.1.3.18" evidence="1"/>
<dbReference type="EMBL" id="AE016795">
    <property type="protein sequence ID" value="AAO09761.1"/>
    <property type="status" value="ALT_INIT"/>
    <property type="molecule type" value="Genomic_DNA"/>
</dbReference>
<dbReference type="RefSeq" id="WP_043920933.1">
    <property type="nucleotide sequence ID" value="NC_004459.3"/>
</dbReference>
<dbReference type="SMR" id="Q8DCT7"/>
<dbReference type="KEGG" id="vvu:VV1_1306"/>
<dbReference type="HOGENOM" id="CLU_045011_19_1_6"/>
<dbReference type="UniPathway" id="UPA00865">
    <property type="reaction ID" value="UER00834"/>
</dbReference>
<dbReference type="Proteomes" id="UP000002275">
    <property type="component" value="Chromosome 1"/>
</dbReference>
<dbReference type="GO" id="GO:0005829">
    <property type="term" value="C:cytosol"/>
    <property type="evidence" value="ECO:0007669"/>
    <property type="project" value="TreeGrafter"/>
</dbReference>
<dbReference type="GO" id="GO:0046872">
    <property type="term" value="F:metal ion binding"/>
    <property type="evidence" value="ECO:0007669"/>
    <property type="project" value="UniProtKB-KW"/>
</dbReference>
<dbReference type="GO" id="GO:0008967">
    <property type="term" value="F:phosphoglycolate phosphatase activity"/>
    <property type="evidence" value="ECO:0007669"/>
    <property type="project" value="UniProtKB-UniRule"/>
</dbReference>
<dbReference type="GO" id="GO:0005975">
    <property type="term" value="P:carbohydrate metabolic process"/>
    <property type="evidence" value="ECO:0007669"/>
    <property type="project" value="InterPro"/>
</dbReference>
<dbReference type="GO" id="GO:0006281">
    <property type="term" value="P:DNA repair"/>
    <property type="evidence" value="ECO:0007669"/>
    <property type="project" value="TreeGrafter"/>
</dbReference>
<dbReference type="GO" id="GO:0046295">
    <property type="term" value="P:glycolate biosynthetic process"/>
    <property type="evidence" value="ECO:0007669"/>
    <property type="project" value="UniProtKB-UniRule"/>
</dbReference>
<dbReference type="CDD" id="cd16417">
    <property type="entry name" value="HAD_PGPase"/>
    <property type="match status" value="1"/>
</dbReference>
<dbReference type="FunFam" id="3.40.50.1000:FF:000022">
    <property type="entry name" value="Phosphoglycolate phosphatase"/>
    <property type="match status" value="1"/>
</dbReference>
<dbReference type="Gene3D" id="3.40.50.1000">
    <property type="entry name" value="HAD superfamily/HAD-like"/>
    <property type="match status" value="1"/>
</dbReference>
<dbReference type="Gene3D" id="1.10.150.240">
    <property type="entry name" value="Putative phosphatase, domain 2"/>
    <property type="match status" value="1"/>
</dbReference>
<dbReference type="HAMAP" id="MF_00495">
    <property type="entry name" value="GPH_hydrolase_bact"/>
    <property type="match status" value="1"/>
</dbReference>
<dbReference type="InterPro" id="IPR050155">
    <property type="entry name" value="HAD-like_hydrolase_sf"/>
</dbReference>
<dbReference type="InterPro" id="IPR036412">
    <property type="entry name" value="HAD-like_sf"/>
</dbReference>
<dbReference type="InterPro" id="IPR006439">
    <property type="entry name" value="HAD-SF_hydro_IA"/>
</dbReference>
<dbReference type="InterPro" id="IPR006549">
    <property type="entry name" value="HAD-SF_hydro_IIIA"/>
</dbReference>
<dbReference type="InterPro" id="IPR041492">
    <property type="entry name" value="HAD_2"/>
</dbReference>
<dbReference type="InterPro" id="IPR023214">
    <property type="entry name" value="HAD_sf"/>
</dbReference>
<dbReference type="InterPro" id="IPR023198">
    <property type="entry name" value="PGP-like_dom2"/>
</dbReference>
<dbReference type="InterPro" id="IPR037512">
    <property type="entry name" value="PGPase_prok"/>
</dbReference>
<dbReference type="NCBIfam" id="TIGR01549">
    <property type="entry name" value="HAD-SF-IA-v1"/>
    <property type="match status" value="1"/>
</dbReference>
<dbReference type="NCBIfam" id="TIGR01509">
    <property type="entry name" value="HAD-SF-IA-v3"/>
    <property type="match status" value="1"/>
</dbReference>
<dbReference type="NCBIfam" id="TIGR01662">
    <property type="entry name" value="HAD-SF-IIIA"/>
    <property type="match status" value="1"/>
</dbReference>
<dbReference type="NCBIfam" id="TIGR01449">
    <property type="entry name" value="PGP_bact"/>
    <property type="match status" value="1"/>
</dbReference>
<dbReference type="NCBIfam" id="NF009695">
    <property type="entry name" value="PRK13222.1-2"/>
    <property type="match status" value="1"/>
</dbReference>
<dbReference type="PANTHER" id="PTHR43434">
    <property type="entry name" value="PHOSPHOGLYCOLATE PHOSPHATASE"/>
    <property type="match status" value="1"/>
</dbReference>
<dbReference type="PANTHER" id="PTHR43434:SF1">
    <property type="entry name" value="PHOSPHOGLYCOLATE PHOSPHATASE"/>
    <property type="match status" value="1"/>
</dbReference>
<dbReference type="Pfam" id="PF13419">
    <property type="entry name" value="HAD_2"/>
    <property type="match status" value="1"/>
</dbReference>
<dbReference type="SFLD" id="SFLDG01135">
    <property type="entry name" value="C1.5.6:_HAD__Beta-PGM__Phospha"/>
    <property type="match status" value="1"/>
</dbReference>
<dbReference type="SFLD" id="SFLDS00003">
    <property type="entry name" value="Haloacid_Dehalogenase"/>
    <property type="match status" value="1"/>
</dbReference>
<dbReference type="SUPFAM" id="SSF56784">
    <property type="entry name" value="HAD-like"/>
    <property type="match status" value="1"/>
</dbReference>
<keyword id="KW-0119">Carbohydrate metabolism</keyword>
<keyword id="KW-0378">Hydrolase</keyword>
<keyword id="KW-0460">Magnesium</keyword>
<keyword id="KW-0479">Metal-binding</keyword>